<gene>
    <name evidence="1" type="primary">ppc</name>
    <name type="ordered locus">ECP_4169</name>
</gene>
<reference key="1">
    <citation type="journal article" date="2006" name="Mol. Microbiol.">
        <title>Role of pathogenicity island-associated integrases in the genome plasticity of uropathogenic Escherichia coli strain 536.</title>
        <authorList>
            <person name="Hochhut B."/>
            <person name="Wilde C."/>
            <person name="Balling G."/>
            <person name="Middendorf B."/>
            <person name="Dobrindt U."/>
            <person name="Brzuszkiewicz E."/>
            <person name="Gottschalk G."/>
            <person name="Carniel E."/>
            <person name="Hacker J."/>
        </authorList>
    </citation>
    <scope>NUCLEOTIDE SEQUENCE [LARGE SCALE GENOMIC DNA]</scope>
    <source>
        <strain>536 / UPEC</strain>
    </source>
</reference>
<sequence>MNEQYSALRSNVSMLGKVLGETIKDALGEHILERVETIRKLSKSSRAGNDANRQELLTTLQNLSNDELLPVARAFSQFLNLANTAEQYHSISPKGEAASNPEVIARTLRKLKNQPELSEDTIKKAVESLSLELVLTAHPTEITRRTLIHKMVEVNACLKQLDNKDIADYEHNQLMRRLRQLIAQSWHTDEIRKLRPSPVDEAKWGFAVVENSLWQGVPNYLRELNEQLEENLGYKLPVEFVPVRFTSWMGGDRDGNPNVTADITRHVLLLSRWKATDLFLKDIQVLVSELSMVEATPELLALVGEEGAAEPYRYLMKNLRSRLMATQAWLEARLKGEELPKPEGLLTQNEELWEPLYACYQSLQACGMGIIANGDLLDTLRRVKCFGVPLVRIDIRQESTRHTEALGELTRYLGIGDYESWSEADKQAFLIRELNSKRPLLPRNWQPSAETREVLDTCQVIAEAPQGSIAAYVISMAKTPSDVLAVHLLLKEAGIGFAMPVAPLFETLDDLNNANDVMTQLLNIDWYRGLIQGKQMVMIGYSDSAKDAGVMAASWAQYQAQDALIKTCEKAGIELTLFHGRGGSIGRGGAPAHAALLSQPPGSLKGGLRVTEQGEMIRFKYGLPEITVSSLSLYTGAILEANLLPPPEPKESWRRIMDELSVISCDLYRGYVRENKDFVPYFRSATPEQELGKLPLGSRPAKRRPTGGVESLRAIPWIFAWTQNRLMLPAWLGAGTALQKVVEDGKQSELEAMCRDWPFFSTRLGMLEMVFAKADLWLAEYYDQRLVDKALWPLGKELRNLQEEDIKVVLAIANDSHLMADLPWIAESIQLRNIYTDPLNVLQAELLHRSRQAEKEGQEPDPRVEQALMVTIAGIAAGMRNTG</sequence>
<keyword id="KW-0120">Carbon dioxide fixation</keyword>
<keyword id="KW-0456">Lyase</keyword>
<keyword id="KW-0460">Magnesium</keyword>
<organism>
    <name type="scientific">Escherichia coli O6:K15:H31 (strain 536 / UPEC)</name>
    <dbReference type="NCBI Taxonomy" id="362663"/>
    <lineage>
        <taxon>Bacteria</taxon>
        <taxon>Pseudomonadati</taxon>
        <taxon>Pseudomonadota</taxon>
        <taxon>Gammaproteobacteria</taxon>
        <taxon>Enterobacterales</taxon>
        <taxon>Enterobacteriaceae</taxon>
        <taxon>Escherichia</taxon>
    </lineage>
</organism>
<evidence type="ECO:0000255" key="1">
    <source>
        <dbReference type="HAMAP-Rule" id="MF_00595"/>
    </source>
</evidence>
<dbReference type="EC" id="4.1.1.31" evidence="1"/>
<dbReference type="EMBL" id="CP000247">
    <property type="protein sequence ID" value="ABG72125.1"/>
    <property type="molecule type" value="Genomic_DNA"/>
</dbReference>
<dbReference type="RefSeq" id="WP_001005579.1">
    <property type="nucleotide sequence ID" value="NC_008253.1"/>
</dbReference>
<dbReference type="SMR" id="Q0TAA4"/>
<dbReference type="GeneID" id="93777937"/>
<dbReference type="KEGG" id="ecp:ECP_4169"/>
<dbReference type="HOGENOM" id="CLU_006557_2_0_6"/>
<dbReference type="Proteomes" id="UP000009182">
    <property type="component" value="Chromosome"/>
</dbReference>
<dbReference type="GO" id="GO:0005829">
    <property type="term" value="C:cytosol"/>
    <property type="evidence" value="ECO:0007669"/>
    <property type="project" value="TreeGrafter"/>
</dbReference>
<dbReference type="GO" id="GO:0000287">
    <property type="term" value="F:magnesium ion binding"/>
    <property type="evidence" value="ECO:0007669"/>
    <property type="project" value="UniProtKB-UniRule"/>
</dbReference>
<dbReference type="GO" id="GO:0008964">
    <property type="term" value="F:phosphoenolpyruvate carboxylase activity"/>
    <property type="evidence" value="ECO:0007669"/>
    <property type="project" value="UniProtKB-UniRule"/>
</dbReference>
<dbReference type="GO" id="GO:0015977">
    <property type="term" value="P:carbon fixation"/>
    <property type="evidence" value="ECO:0007669"/>
    <property type="project" value="UniProtKB-UniRule"/>
</dbReference>
<dbReference type="GO" id="GO:0006107">
    <property type="term" value="P:oxaloacetate metabolic process"/>
    <property type="evidence" value="ECO:0007669"/>
    <property type="project" value="UniProtKB-UniRule"/>
</dbReference>
<dbReference type="GO" id="GO:0006099">
    <property type="term" value="P:tricarboxylic acid cycle"/>
    <property type="evidence" value="ECO:0007669"/>
    <property type="project" value="InterPro"/>
</dbReference>
<dbReference type="FunFam" id="1.20.1440.90:FF:000002">
    <property type="entry name" value="Phosphoenolpyruvate carboxylase"/>
    <property type="match status" value="1"/>
</dbReference>
<dbReference type="Gene3D" id="1.20.1440.90">
    <property type="entry name" value="Phosphoenolpyruvate/pyruvate domain"/>
    <property type="match status" value="1"/>
</dbReference>
<dbReference type="HAMAP" id="MF_00595">
    <property type="entry name" value="PEPcase_type1"/>
    <property type="match status" value="1"/>
</dbReference>
<dbReference type="InterPro" id="IPR021135">
    <property type="entry name" value="PEP_COase"/>
</dbReference>
<dbReference type="InterPro" id="IPR022805">
    <property type="entry name" value="PEP_COase_bac/pln-type"/>
</dbReference>
<dbReference type="InterPro" id="IPR018129">
    <property type="entry name" value="PEP_COase_Lys_AS"/>
</dbReference>
<dbReference type="InterPro" id="IPR033129">
    <property type="entry name" value="PEPCASE_His_AS"/>
</dbReference>
<dbReference type="InterPro" id="IPR015813">
    <property type="entry name" value="Pyrv/PenolPyrv_kinase-like_dom"/>
</dbReference>
<dbReference type="NCBIfam" id="NF000584">
    <property type="entry name" value="PRK00009.1"/>
    <property type="match status" value="1"/>
</dbReference>
<dbReference type="PANTHER" id="PTHR30523">
    <property type="entry name" value="PHOSPHOENOLPYRUVATE CARBOXYLASE"/>
    <property type="match status" value="1"/>
</dbReference>
<dbReference type="PANTHER" id="PTHR30523:SF6">
    <property type="entry name" value="PHOSPHOENOLPYRUVATE CARBOXYLASE"/>
    <property type="match status" value="1"/>
</dbReference>
<dbReference type="Pfam" id="PF00311">
    <property type="entry name" value="PEPcase"/>
    <property type="match status" value="1"/>
</dbReference>
<dbReference type="PRINTS" id="PR00150">
    <property type="entry name" value="PEPCARBXLASE"/>
</dbReference>
<dbReference type="SUPFAM" id="SSF51621">
    <property type="entry name" value="Phosphoenolpyruvate/pyruvate domain"/>
    <property type="match status" value="1"/>
</dbReference>
<dbReference type="PROSITE" id="PS00781">
    <property type="entry name" value="PEPCASE_1"/>
    <property type="match status" value="1"/>
</dbReference>
<dbReference type="PROSITE" id="PS00393">
    <property type="entry name" value="PEPCASE_2"/>
    <property type="match status" value="1"/>
</dbReference>
<protein>
    <recommendedName>
        <fullName evidence="1">Phosphoenolpyruvate carboxylase</fullName>
        <shortName evidence="1">PEPC</shortName>
        <shortName evidence="1">PEPCase</shortName>
        <ecNumber evidence="1">4.1.1.31</ecNumber>
    </recommendedName>
</protein>
<accession>Q0TAA4</accession>
<feature type="chain" id="PRO_1000025557" description="Phosphoenolpyruvate carboxylase">
    <location>
        <begin position="1"/>
        <end position="883"/>
    </location>
</feature>
<feature type="active site" evidence="1">
    <location>
        <position position="138"/>
    </location>
</feature>
<feature type="active site" evidence="1">
    <location>
        <position position="546"/>
    </location>
</feature>
<name>CAPP_ECOL5</name>
<proteinExistence type="inferred from homology"/>
<comment type="function">
    <text evidence="1">Forms oxaloacetate, a four-carbon dicarboxylic acid source for the tricarboxylic acid cycle.</text>
</comment>
<comment type="catalytic activity">
    <reaction evidence="1">
        <text>oxaloacetate + phosphate = phosphoenolpyruvate + hydrogencarbonate</text>
        <dbReference type="Rhea" id="RHEA:28370"/>
        <dbReference type="ChEBI" id="CHEBI:16452"/>
        <dbReference type="ChEBI" id="CHEBI:17544"/>
        <dbReference type="ChEBI" id="CHEBI:43474"/>
        <dbReference type="ChEBI" id="CHEBI:58702"/>
        <dbReference type="EC" id="4.1.1.31"/>
    </reaction>
</comment>
<comment type="cofactor">
    <cofactor evidence="1">
        <name>Mg(2+)</name>
        <dbReference type="ChEBI" id="CHEBI:18420"/>
    </cofactor>
</comment>
<comment type="similarity">
    <text evidence="1">Belongs to the PEPCase type 1 family.</text>
</comment>